<keyword id="KW-0067">ATP-binding</keyword>
<keyword id="KW-0963">Cytoplasm</keyword>
<keyword id="KW-0275">Fatty acid biosynthesis</keyword>
<keyword id="KW-0276">Fatty acid metabolism</keyword>
<keyword id="KW-0444">Lipid biosynthesis</keyword>
<keyword id="KW-0443">Lipid metabolism</keyword>
<keyword id="KW-0479">Metal-binding</keyword>
<keyword id="KW-0547">Nucleotide-binding</keyword>
<keyword id="KW-1185">Reference proteome</keyword>
<keyword id="KW-0808">Transferase</keyword>
<keyword id="KW-0862">Zinc</keyword>
<keyword id="KW-0863">Zinc-finger</keyword>
<comment type="function">
    <text evidence="1">Component of the acetyl coenzyme A carboxylase (ACC) complex. Biotin carboxylase (BC) catalyzes the carboxylation of biotin on its carrier protein (BCCP) and then the CO(2) group is transferred by the transcarboxylase to acetyl-CoA to form malonyl-CoA.</text>
</comment>
<comment type="catalytic activity">
    <reaction evidence="1">
        <text>N(6)-carboxybiotinyl-L-lysyl-[protein] + acetyl-CoA = N(6)-biotinyl-L-lysyl-[protein] + malonyl-CoA</text>
        <dbReference type="Rhea" id="RHEA:54728"/>
        <dbReference type="Rhea" id="RHEA-COMP:10505"/>
        <dbReference type="Rhea" id="RHEA-COMP:10506"/>
        <dbReference type="ChEBI" id="CHEBI:57288"/>
        <dbReference type="ChEBI" id="CHEBI:57384"/>
        <dbReference type="ChEBI" id="CHEBI:83144"/>
        <dbReference type="ChEBI" id="CHEBI:83145"/>
        <dbReference type="EC" id="2.1.3.15"/>
    </reaction>
</comment>
<comment type="cofactor">
    <cofactor evidence="1">
        <name>Zn(2+)</name>
        <dbReference type="ChEBI" id="CHEBI:29105"/>
    </cofactor>
    <text evidence="1">Binds 1 zinc ion per subunit.</text>
</comment>
<comment type="pathway">
    <text evidence="1">Lipid metabolism; malonyl-CoA biosynthesis; malonyl-CoA from acetyl-CoA: step 1/1.</text>
</comment>
<comment type="subunit">
    <text evidence="1">Acetyl-CoA carboxylase is a heterohexamer composed of biotin carboxyl carrier protein (AccB), biotin carboxylase (AccC) and two subunits each of ACCase subunit alpha (AccA) and ACCase subunit beta (AccD).</text>
</comment>
<comment type="subcellular location">
    <subcellularLocation>
        <location evidence="1">Cytoplasm</location>
    </subcellularLocation>
</comment>
<comment type="similarity">
    <text evidence="1">Belongs to the AccD/PCCB family.</text>
</comment>
<gene>
    <name evidence="1" type="primary">accD</name>
    <name type="ordered locus">MCA2493</name>
</gene>
<evidence type="ECO:0000255" key="1">
    <source>
        <dbReference type="HAMAP-Rule" id="MF_01395"/>
    </source>
</evidence>
<evidence type="ECO:0000255" key="2">
    <source>
        <dbReference type="PROSITE-ProRule" id="PRU01136"/>
    </source>
</evidence>
<feature type="chain" id="PRO_0000359010" description="Acetyl-coenzyme A carboxylase carboxyl transferase subunit beta">
    <location>
        <begin position="1"/>
        <end position="324"/>
    </location>
</feature>
<feature type="domain" description="CoA carboxyltransferase N-terminal" evidence="2">
    <location>
        <begin position="28"/>
        <end position="297"/>
    </location>
</feature>
<feature type="zinc finger region" description="C4-type" evidence="1">
    <location>
        <begin position="32"/>
        <end position="54"/>
    </location>
</feature>
<feature type="binding site" evidence="1">
    <location>
        <position position="32"/>
    </location>
    <ligand>
        <name>Zn(2+)</name>
        <dbReference type="ChEBI" id="CHEBI:29105"/>
    </ligand>
</feature>
<feature type="binding site" evidence="1">
    <location>
        <position position="35"/>
    </location>
    <ligand>
        <name>Zn(2+)</name>
        <dbReference type="ChEBI" id="CHEBI:29105"/>
    </ligand>
</feature>
<feature type="binding site" evidence="1">
    <location>
        <position position="51"/>
    </location>
    <ligand>
        <name>Zn(2+)</name>
        <dbReference type="ChEBI" id="CHEBI:29105"/>
    </ligand>
</feature>
<feature type="binding site" evidence="1">
    <location>
        <position position="54"/>
    </location>
    <ligand>
        <name>Zn(2+)</name>
        <dbReference type="ChEBI" id="CHEBI:29105"/>
    </ligand>
</feature>
<organism>
    <name type="scientific">Methylococcus capsulatus (strain ATCC 33009 / NCIMB 11132 / Bath)</name>
    <dbReference type="NCBI Taxonomy" id="243233"/>
    <lineage>
        <taxon>Bacteria</taxon>
        <taxon>Pseudomonadati</taxon>
        <taxon>Pseudomonadota</taxon>
        <taxon>Gammaproteobacteria</taxon>
        <taxon>Methylococcales</taxon>
        <taxon>Methylococcaceae</taxon>
        <taxon>Methylococcus</taxon>
    </lineage>
</organism>
<proteinExistence type="inferred from homology"/>
<protein>
    <recommendedName>
        <fullName evidence="1">Acetyl-coenzyme A carboxylase carboxyl transferase subunit beta</fullName>
        <shortName evidence="1">ACCase subunit beta</shortName>
        <shortName evidence="1">Acetyl-CoA carboxylase carboxyltransferase subunit beta</shortName>
        <ecNumber evidence="1">2.1.3.15</ecNumber>
    </recommendedName>
</protein>
<reference key="1">
    <citation type="journal article" date="2004" name="PLoS Biol.">
        <title>Genomic insights into methanotrophy: the complete genome sequence of Methylococcus capsulatus (Bath).</title>
        <authorList>
            <person name="Ward N.L."/>
            <person name="Larsen O."/>
            <person name="Sakwa J."/>
            <person name="Bruseth L."/>
            <person name="Khouri H.M."/>
            <person name="Durkin A.S."/>
            <person name="Dimitrov G."/>
            <person name="Jiang L."/>
            <person name="Scanlan D."/>
            <person name="Kang K.H."/>
            <person name="Lewis M.R."/>
            <person name="Nelson K.E."/>
            <person name="Methe B.A."/>
            <person name="Wu M."/>
            <person name="Heidelberg J.F."/>
            <person name="Paulsen I.T."/>
            <person name="Fouts D.E."/>
            <person name="Ravel J."/>
            <person name="Tettelin H."/>
            <person name="Ren Q."/>
            <person name="Read T.D."/>
            <person name="DeBoy R.T."/>
            <person name="Seshadri R."/>
            <person name="Salzberg S.L."/>
            <person name="Jensen H.B."/>
            <person name="Birkeland N.K."/>
            <person name="Nelson W.C."/>
            <person name="Dodson R.J."/>
            <person name="Grindhaug S.H."/>
            <person name="Holt I.E."/>
            <person name="Eidhammer I."/>
            <person name="Jonasen I."/>
            <person name="Vanaken S."/>
            <person name="Utterback T.R."/>
            <person name="Feldblyum T.V."/>
            <person name="Fraser C.M."/>
            <person name="Lillehaug J.R."/>
            <person name="Eisen J.A."/>
        </authorList>
    </citation>
    <scope>NUCLEOTIDE SEQUENCE [LARGE SCALE GENOMIC DNA]</scope>
    <source>
        <strain>ATCC 33009 / NCIMB 11132 / Bath</strain>
    </source>
</reference>
<name>ACCD_METCA</name>
<sequence length="324" mass="34935">MTLSWFHKLVPSKIRTEASTKSTVPEGLWCKCPSCNAILYKSEVERNLEVCPKCSHHMRISARKRLHLFLDPGNRLEIGEGLAPLDPLKFKDSKKYKDRLQQAQKATGEKDALIVVAGQLLGLPVVAGAFNFEFMGGSMGSVVGERFVRGVNHSLEHGAPFVVFSASGGARMQESLLSLFQMAKTSAALGRLSKARIPFISVLTDPTMGGVSASFAMLGDINIAEPGALIGFAGPRVIEQTVREKLPEGFQRSEFLLEHGAVDMIVDRRDLRERIAALLALMTRDGRAVAPAAAKAPPAIGEGAGEADLARCLSALPMDDPEAE</sequence>
<accession>Q604P5</accession>
<dbReference type="EC" id="2.1.3.15" evidence="1"/>
<dbReference type="EMBL" id="AE017282">
    <property type="protein sequence ID" value="AAU91372.1"/>
    <property type="molecule type" value="Genomic_DNA"/>
</dbReference>
<dbReference type="RefSeq" id="WP_010961716.1">
    <property type="nucleotide sequence ID" value="NC_002977.6"/>
</dbReference>
<dbReference type="SMR" id="Q604P5"/>
<dbReference type="STRING" id="243233.MCA2493"/>
<dbReference type="GeneID" id="88224691"/>
<dbReference type="KEGG" id="mca:MCA2493"/>
<dbReference type="eggNOG" id="COG0777">
    <property type="taxonomic scope" value="Bacteria"/>
</dbReference>
<dbReference type="HOGENOM" id="CLU_015486_1_0_6"/>
<dbReference type="UniPathway" id="UPA00655">
    <property type="reaction ID" value="UER00711"/>
</dbReference>
<dbReference type="Proteomes" id="UP000006821">
    <property type="component" value="Chromosome"/>
</dbReference>
<dbReference type="GO" id="GO:0009329">
    <property type="term" value="C:acetate CoA-transferase complex"/>
    <property type="evidence" value="ECO:0007669"/>
    <property type="project" value="TreeGrafter"/>
</dbReference>
<dbReference type="GO" id="GO:0003989">
    <property type="term" value="F:acetyl-CoA carboxylase activity"/>
    <property type="evidence" value="ECO:0007669"/>
    <property type="project" value="InterPro"/>
</dbReference>
<dbReference type="GO" id="GO:0005524">
    <property type="term" value="F:ATP binding"/>
    <property type="evidence" value="ECO:0007669"/>
    <property type="project" value="UniProtKB-KW"/>
</dbReference>
<dbReference type="GO" id="GO:0016743">
    <property type="term" value="F:carboxyl- or carbamoyltransferase activity"/>
    <property type="evidence" value="ECO:0007669"/>
    <property type="project" value="UniProtKB-UniRule"/>
</dbReference>
<dbReference type="GO" id="GO:0008270">
    <property type="term" value="F:zinc ion binding"/>
    <property type="evidence" value="ECO:0007669"/>
    <property type="project" value="UniProtKB-UniRule"/>
</dbReference>
<dbReference type="GO" id="GO:0006633">
    <property type="term" value="P:fatty acid biosynthetic process"/>
    <property type="evidence" value="ECO:0007669"/>
    <property type="project" value="UniProtKB-KW"/>
</dbReference>
<dbReference type="GO" id="GO:2001295">
    <property type="term" value="P:malonyl-CoA biosynthetic process"/>
    <property type="evidence" value="ECO:0007669"/>
    <property type="project" value="UniProtKB-UniRule"/>
</dbReference>
<dbReference type="Gene3D" id="3.90.226.10">
    <property type="entry name" value="2-enoyl-CoA Hydratase, Chain A, domain 1"/>
    <property type="match status" value="1"/>
</dbReference>
<dbReference type="HAMAP" id="MF_01395">
    <property type="entry name" value="AcetylCoA_CT_beta"/>
    <property type="match status" value="1"/>
</dbReference>
<dbReference type="InterPro" id="IPR034733">
    <property type="entry name" value="AcCoA_carboxyl_beta"/>
</dbReference>
<dbReference type="InterPro" id="IPR000438">
    <property type="entry name" value="Acetyl_CoA_COase_Trfase_b_su"/>
</dbReference>
<dbReference type="InterPro" id="IPR029045">
    <property type="entry name" value="ClpP/crotonase-like_dom_sf"/>
</dbReference>
<dbReference type="InterPro" id="IPR011762">
    <property type="entry name" value="COA_CT_N"/>
</dbReference>
<dbReference type="InterPro" id="IPR041010">
    <property type="entry name" value="Znf-ACC"/>
</dbReference>
<dbReference type="NCBIfam" id="TIGR00515">
    <property type="entry name" value="accD"/>
    <property type="match status" value="1"/>
</dbReference>
<dbReference type="PANTHER" id="PTHR42995">
    <property type="entry name" value="ACETYL-COENZYME A CARBOXYLASE CARBOXYL TRANSFERASE SUBUNIT BETA, CHLOROPLASTIC"/>
    <property type="match status" value="1"/>
</dbReference>
<dbReference type="PANTHER" id="PTHR42995:SF5">
    <property type="entry name" value="ACETYL-COENZYME A CARBOXYLASE CARBOXYL TRANSFERASE SUBUNIT BETA, CHLOROPLASTIC"/>
    <property type="match status" value="1"/>
</dbReference>
<dbReference type="Pfam" id="PF01039">
    <property type="entry name" value="Carboxyl_trans"/>
    <property type="match status" value="1"/>
</dbReference>
<dbReference type="Pfam" id="PF17848">
    <property type="entry name" value="Zn_ribbon_ACC"/>
    <property type="match status" value="1"/>
</dbReference>
<dbReference type="PRINTS" id="PR01070">
    <property type="entry name" value="ACCCTRFRASEB"/>
</dbReference>
<dbReference type="SUPFAM" id="SSF52096">
    <property type="entry name" value="ClpP/crotonase"/>
    <property type="match status" value="1"/>
</dbReference>
<dbReference type="PROSITE" id="PS50980">
    <property type="entry name" value="COA_CT_NTER"/>
    <property type="match status" value="1"/>
</dbReference>